<organism>
    <name type="scientific">Xenopus laevis</name>
    <name type="common">African clawed frog</name>
    <dbReference type="NCBI Taxonomy" id="8355"/>
    <lineage>
        <taxon>Eukaryota</taxon>
        <taxon>Metazoa</taxon>
        <taxon>Chordata</taxon>
        <taxon>Craniata</taxon>
        <taxon>Vertebrata</taxon>
        <taxon>Euteleostomi</taxon>
        <taxon>Amphibia</taxon>
        <taxon>Batrachia</taxon>
        <taxon>Anura</taxon>
        <taxon>Pipoidea</taxon>
        <taxon>Pipidae</taxon>
        <taxon>Xenopodinae</taxon>
        <taxon>Xenopus</taxon>
        <taxon>Xenopus</taxon>
    </lineage>
</organism>
<dbReference type="EMBL" id="X99309">
    <property type="protein sequence ID" value="CAA67687.1"/>
    <property type="molecule type" value="mRNA"/>
</dbReference>
<dbReference type="RefSeq" id="NP_001165163.1">
    <property type="nucleotide sequence ID" value="NM_001171692.1"/>
</dbReference>
<dbReference type="SMR" id="P70063"/>
<dbReference type="GeneID" id="397969"/>
<dbReference type="CTD" id="397969"/>
<dbReference type="Proteomes" id="UP000186698">
    <property type="component" value="Unplaced"/>
</dbReference>
<dbReference type="GO" id="GO:1990907">
    <property type="term" value="C:beta-catenin-TCF complex"/>
    <property type="evidence" value="ECO:0000318"/>
    <property type="project" value="GO_Central"/>
</dbReference>
<dbReference type="GO" id="GO:0000785">
    <property type="term" value="C:chromatin"/>
    <property type="evidence" value="ECO:0000318"/>
    <property type="project" value="GO_Central"/>
</dbReference>
<dbReference type="GO" id="GO:0000981">
    <property type="term" value="F:DNA-binding transcription factor activity, RNA polymerase II-specific"/>
    <property type="evidence" value="ECO:0000318"/>
    <property type="project" value="GO_Central"/>
</dbReference>
<dbReference type="GO" id="GO:0000978">
    <property type="term" value="F:RNA polymerase II cis-regulatory region sequence-specific DNA binding"/>
    <property type="evidence" value="ECO:0000318"/>
    <property type="project" value="GO_Central"/>
</dbReference>
<dbReference type="GO" id="GO:0060070">
    <property type="term" value="P:canonical Wnt signaling pathway"/>
    <property type="evidence" value="ECO:0000318"/>
    <property type="project" value="GO_Central"/>
</dbReference>
<dbReference type="GO" id="GO:0006357">
    <property type="term" value="P:regulation of transcription by RNA polymerase II"/>
    <property type="evidence" value="ECO:0000318"/>
    <property type="project" value="GO_Central"/>
</dbReference>
<dbReference type="CDD" id="cd21996">
    <property type="entry name" value="HMG-box_TCF7-like"/>
    <property type="match status" value="1"/>
</dbReference>
<dbReference type="FunFam" id="1.10.30.10:FF:000001">
    <property type="entry name" value="transcription factor 7 isoform X2"/>
    <property type="match status" value="1"/>
</dbReference>
<dbReference type="FunFam" id="4.10.900.10:FF:000002">
    <property type="entry name" value="transcription factor 7-like 2 isoform X1"/>
    <property type="match status" value="1"/>
</dbReference>
<dbReference type="Gene3D" id="1.10.30.10">
    <property type="entry name" value="High mobility group box domain"/>
    <property type="match status" value="1"/>
</dbReference>
<dbReference type="Gene3D" id="4.10.900.10">
    <property type="entry name" value="TCF3-CBD (Catenin binding domain)"/>
    <property type="match status" value="1"/>
</dbReference>
<dbReference type="InterPro" id="IPR027397">
    <property type="entry name" value="Catenin-bd_sf"/>
</dbReference>
<dbReference type="InterPro" id="IPR013558">
    <property type="entry name" value="CTNNB1-bd_N"/>
</dbReference>
<dbReference type="InterPro" id="IPR009071">
    <property type="entry name" value="HMG_box_dom"/>
</dbReference>
<dbReference type="InterPro" id="IPR036910">
    <property type="entry name" value="HMG_box_dom_sf"/>
</dbReference>
<dbReference type="InterPro" id="IPR024940">
    <property type="entry name" value="TCF/LEF"/>
</dbReference>
<dbReference type="PANTHER" id="PTHR10373">
    <property type="entry name" value="TRANSCRIPTION FACTOR 7 FAMILY MEMBER"/>
    <property type="match status" value="1"/>
</dbReference>
<dbReference type="PANTHER" id="PTHR10373:SF25">
    <property type="entry name" value="TRANSCRIPTION FACTOR 7-LIKE 1"/>
    <property type="match status" value="1"/>
</dbReference>
<dbReference type="Pfam" id="PF08347">
    <property type="entry name" value="CTNNB1_binding"/>
    <property type="match status" value="1"/>
</dbReference>
<dbReference type="Pfam" id="PF00505">
    <property type="entry name" value="HMG_box"/>
    <property type="match status" value="1"/>
</dbReference>
<dbReference type="SMART" id="SM00398">
    <property type="entry name" value="HMG"/>
    <property type="match status" value="1"/>
</dbReference>
<dbReference type="SUPFAM" id="SSF47095">
    <property type="entry name" value="HMG-box"/>
    <property type="match status" value="1"/>
</dbReference>
<dbReference type="PROSITE" id="PS50118">
    <property type="entry name" value="HMG_BOX_2"/>
    <property type="match status" value="1"/>
</dbReference>
<gene>
    <name type="primary">tcf7l1-c</name>
    <name type="synonym">tcf3c</name>
</gene>
<reference key="1">
    <citation type="journal article" date="1996" name="Cell">
        <title>XTcf-3 transcription factor mediates beta-catenin-induced axis formation in Xenopus embryos.</title>
        <authorList>
            <person name="Molenaar M."/>
            <person name="van de Wetering M."/>
            <person name="Peterson-Maduro J."/>
            <person name="Godsave S."/>
            <person name="Korinkek V."/>
            <person name="Roose J."/>
            <person name="Destree O."/>
            <person name="Clevers H."/>
        </authorList>
    </citation>
    <scope>NUCLEOTIDE SEQUENCE [MRNA]</scope>
</reference>
<keyword id="KW-0010">Activator</keyword>
<keyword id="KW-0217">Developmental protein</keyword>
<keyword id="KW-0238">DNA-binding</keyword>
<keyword id="KW-0539">Nucleus</keyword>
<keyword id="KW-0597">Phosphoprotein</keyword>
<keyword id="KW-1185">Reference proteome</keyword>
<keyword id="KW-0678">Repressor</keyword>
<keyword id="KW-0804">Transcription</keyword>
<keyword id="KW-0805">Transcription regulation</keyword>
<keyword id="KW-0879">Wnt signaling pathway</keyword>
<sequence>MPQLNSGGGDELGANDELIRFKDEGEQEEKSPGEGSAEDLADVKSSLVNESENHSSDSDSEVERRPPPRETFEKPRDYLSEAFRRQQDAAFFKGPPYAGYPFLMIPDLGGITCPMVPSHPASRAYLQMKWPLLDSPSTAGLKDARSPSPAHLSNKVPVVQHPHHMHPLTPLITYSNEHFSPGTPPGHLSPEIDPKTGIPRPPHPSELSPYYPLSPGAVGQIPHRLGWLVPQQGQPMYSIPPGGFRHPYPALAMNASMSSLVSSRFSPHMVPPPHHSLHTSGIPHPAIVSPIVKQEPSSGNISPNLSRKSNVVVKKEEEKKPHIKKPLNAFMLYMKEMRAKVVAECTLKESAAINQILGRRWHSLSREEQAKYYELARKERQLHSQLYPSWSARDNYGKKKKRKREKQSPEMENYTKTKKMCVQHFPSDKSCDSPASSHGSMLDSPATPSAALASPAAPAATHSEQAQPLSLTTKPEARALSHSAAFLASKSPSSSSLSGHLPSPVGASLLSRPIPLTSSILSPPGVFPSALQALPLLQAQPLSLVTRSSD</sequence>
<proteinExistence type="evidence at transcript level"/>
<accession>P70063</accession>
<evidence type="ECO:0000250" key="1"/>
<evidence type="ECO:0000255" key="2">
    <source>
        <dbReference type="PROSITE-ProRule" id="PRU00267"/>
    </source>
</evidence>
<evidence type="ECO:0000256" key="3">
    <source>
        <dbReference type="SAM" id="MobiDB-lite"/>
    </source>
</evidence>
<evidence type="ECO:0000305" key="4"/>
<comment type="function">
    <text evidence="1">Participates in the Wnt signaling pathway. Binds to DNA and acts as a repressor in the absence of ctnnb1-A and possibly ctnnb1-B, and as an activator in the presence of these proteins. Required early in development for the establishment of the dorsal body axis in response to maternal Wnt signaling (By similarity).</text>
</comment>
<comment type="subunit">
    <text evidence="1">Interacts with csnk1e, ctnnb1-A, ctbp-B, dact1-A and gsk3b. May interact with ase and tle4-A (By similarity).</text>
</comment>
<comment type="subcellular location">
    <subcellularLocation>
        <location evidence="2">Nucleus</location>
    </subcellularLocation>
</comment>
<comment type="PTM">
    <text evidence="1">Phosphorylated. Phosphorylation by csnk1e promotes binding to ctnnb1-A while phosphorylation by gsk3b may reverse this effect (By similarity).</text>
</comment>
<comment type="similarity">
    <text evidence="4">Belongs to the TCF/LEF family.</text>
</comment>
<protein>
    <recommendedName>
        <fullName>Transcription factor 7-like 1-C</fullName>
    </recommendedName>
    <alternativeName>
        <fullName>HMG box transcription factor 3-C</fullName>
        <shortName>TCF-3-C</shortName>
        <shortName>xTcf-3c</shortName>
    </alternativeName>
</protein>
<feature type="chain" id="PRO_0000048618" description="Transcription factor 7-like 1-C">
    <location>
        <begin position="1"/>
        <end position="550"/>
    </location>
</feature>
<feature type="DNA-binding region" description="HMG box" evidence="2">
    <location>
        <begin position="323"/>
        <end position="391"/>
    </location>
</feature>
<feature type="region of interest" description="Disordered" evidence="3">
    <location>
        <begin position="1"/>
        <end position="76"/>
    </location>
</feature>
<feature type="region of interest" description="Interaction with CTNNB1-A" evidence="1">
    <location>
        <begin position="1"/>
        <end position="60"/>
    </location>
</feature>
<feature type="region of interest" description="Interaction with AES and TLE4-A" evidence="1">
    <location>
        <begin position="108"/>
        <end position="311"/>
    </location>
</feature>
<feature type="region of interest" description="Disordered" evidence="3">
    <location>
        <begin position="182"/>
        <end position="206"/>
    </location>
</feature>
<feature type="region of interest" description="Disordered" evidence="3">
    <location>
        <begin position="390"/>
        <end position="473"/>
    </location>
</feature>
<feature type="region of interest" description="Interaction with CTBP-B" evidence="1">
    <location>
        <begin position="407"/>
        <end position="550"/>
    </location>
</feature>
<feature type="compositionally biased region" description="Gly residues" evidence="3">
    <location>
        <begin position="1"/>
        <end position="11"/>
    </location>
</feature>
<feature type="compositionally biased region" description="Basic and acidic residues" evidence="3">
    <location>
        <begin position="17"/>
        <end position="32"/>
    </location>
</feature>
<feature type="compositionally biased region" description="Basic and acidic residues" evidence="3">
    <location>
        <begin position="51"/>
        <end position="76"/>
    </location>
</feature>
<feature type="compositionally biased region" description="Basic and acidic residues" evidence="3">
    <location>
        <begin position="406"/>
        <end position="415"/>
    </location>
</feature>
<feature type="compositionally biased region" description="Low complexity" evidence="3">
    <location>
        <begin position="444"/>
        <end position="463"/>
    </location>
</feature>
<feature type="compositionally biased region" description="Polar residues" evidence="3">
    <location>
        <begin position="464"/>
        <end position="473"/>
    </location>
</feature>
<name>T7L1C_XENLA</name>